<gene>
    <name type="primary">VMA11</name>
    <name type="synonym">CLS9</name>
    <name type="synonym">TFP3</name>
    <name type="ordered locus">YPL234C</name>
    <name type="ORF">P1064</name>
</gene>
<organism>
    <name type="scientific">Saccharomyces cerevisiae (strain ATCC 204508 / S288c)</name>
    <name type="common">Baker's yeast</name>
    <dbReference type="NCBI Taxonomy" id="559292"/>
    <lineage>
        <taxon>Eukaryota</taxon>
        <taxon>Fungi</taxon>
        <taxon>Dikarya</taxon>
        <taxon>Ascomycota</taxon>
        <taxon>Saccharomycotina</taxon>
        <taxon>Saccharomycetes</taxon>
        <taxon>Saccharomycetales</taxon>
        <taxon>Saccharomycetaceae</taxon>
        <taxon>Saccharomyces</taxon>
    </lineage>
</organism>
<name>VATL2_YEAST</name>
<sequence length="164" mass="17037">MSTQLASNIYAPLYAPFFGFAGCAAAMVLSCLGAAIGTAKSGIGIAGIGTFKPELIMKSLIPVVMSGILAIYGLVVAVLIAGNLSPTEDYTLFNGFMHLSCGLCVGFACLSSGYAIGMVGDVGVRKYMHQPRLFVGIVLILIFSEVLGLYGMIVALILNTRGSE</sequence>
<keyword id="KW-0002">3D-structure</keyword>
<keyword id="KW-0375">Hydrogen ion transport</keyword>
<keyword id="KW-0406">Ion transport</keyword>
<keyword id="KW-0472">Membrane</keyword>
<keyword id="KW-1185">Reference proteome</keyword>
<keyword id="KW-0812">Transmembrane</keyword>
<keyword id="KW-1133">Transmembrane helix</keyword>
<keyword id="KW-0813">Transport</keyword>
<keyword id="KW-0926">Vacuole</keyword>
<comment type="function">
    <text evidence="3 6">Proton-conducting pore forming subunit of the V0 complex of vacuolar(H+)-ATPase (V-ATPase), a multisubunit enzyme composed of a peripheral complex (V1) that hydrolyzes ATP and a membrane integral complex (V0) that translocates protons (PubMed:1837023, PubMed:9030535). V-ATPase is responsible for acidifying and maintaining the pH of intracellular compartments (PubMed:1837023, PubMed:9030535).</text>
</comment>
<comment type="subunit">
    <text evidence="4 5">V-ATPase is a heteromultimeric enzyme composed of a peripheral catalytic V1 complex (components A to H) attached to an integral membrane V0 proton pore complex (components: a, c, c', c'', d, e, f and VOA1) (PubMed:27776355, PubMed:29526695). The decameric c-ring forms the proton-conducting pore, and is composed of eight proteolipid subunits c, one subunit c' and one subunit c'' (PubMed:27776355, PubMed:29526695).</text>
</comment>
<comment type="subcellular location">
    <subcellularLocation>
        <location evidence="6">Vacuole membrane</location>
        <topology evidence="1">Multi-pass membrane protein</topology>
    </subcellularLocation>
</comment>
<comment type="miscellaneous">
    <text evidence="2">Present with 538 molecules/cell in log phase SD medium.</text>
</comment>
<comment type="similarity">
    <text evidence="7">Belongs to the V-ATPase proteolipid subunit family.</text>
</comment>
<comment type="sequence caution" evidence="7">
    <conflict type="frameshift">
        <sequence resource="EMBL-CDS" id="AAA35149"/>
    </conflict>
</comment>
<accession>P32842</accession>
<accession>D6W3D6</accession>
<accession>P32365</accession>
<proteinExistence type="evidence at protein level"/>
<evidence type="ECO:0000255" key="1"/>
<evidence type="ECO:0000269" key="2">
    <source>
    </source>
</evidence>
<evidence type="ECO:0000269" key="3">
    <source>
    </source>
</evidence>
<evidence type="ECO:0000269" key="4">
    <source>
    </source>
</evidence>
<evidence type="ECO:0000269" key="5">
    <source>
    </source>
</evidence>
<evidence type="ECO:0000269" key="6">
    <source>
    </source>
</evidence>
<evidence type="ECO:0000305" key="7"/>
<evidence type="ECO:0007744" key="8">
    <source>
        <dbReference type="PDB" id="5TJ5"/>
    </source>
</evidence>
<evidence type="ECO:0007744" key="9">
    <source>
        <dbReference type="PDB" id="6C6L"/>
    </source>
</evidence>
<evidence type="ECO:0007829" key="10">
    <source>
        <dbReference type="PDB" id="6M0R"/>
    </source>
</evidence>
<evidence type="ECO:0007829" key="11">
    <source>
        <dbReference type="PDB" id="8EAS"/>
    </source>
</evidence>
<protein>
    <recommendedName>
        <fullName>V-type proton ATPase subunit c'</fullName>
        <shortName>V-ATPase subunit c'</shortName>
    </recommendedName>
    <alternativeName>
        <fullName>Proteolipid protein VMA11</fullName>
    </alternativeName>
    <alternativeName>
        <fullName>Trifluoperazine resistance protein 3</fullName>
    </alternativeName>
    <alternativeName>
        <fullName>V-ATPase 16 kDa proteolipid subunit 2</fullName>
    </alternativeName>
    <alternativeName>
        <fullName>Vacuolar proton pump c' subunit</fullName>
    </alternativeName>
</protein>
<reference key="1">
    <citation type="journal article" date="1991" name="J. Biol. Chem.">
        <title>VMA11, a novel gene that encodes a putative proteolipid, is indispensable for expression of yeast vacuolar membrane H(+)-ATPase activity.</title>
        <authorList>
            <person name="Umemoto N."/>
            <person name="Ohya Y."/>
            <person name="Anraku Y."/>
        </authorList>
    </citation>
    <scope>NUCLEOTIDE SEQUENCE [GENOMIC DNA]</scope>
    <scope>FUNCTION</scope>
    <source>
        <strain>ATCC 26786 / X2180-1A</strain>
    </source>
</reference>
<reference key="2">
    <citation type="journal article" date="1990" name="Mol. Cell. Biol.">
        <title>Expression of a proteolipid gene from a high-copy-number plasmid confers trifluoperazine resistance to Saccharomyces cerevisiae.</title>
        <authorList>
            <person name="Shih C.-K."/>
            <person name="Kwong J."/>
            <person name="Montalvo E."/>
            <person name="Neff N."/>
        </authorList>
    </citation>
    <scope>NUCLEOTIDE SEQUENCE [GENOMIC DNA]</scope>
    <source>
        <strain>ATCC 204508 / S288c</strain>
    </source>
</reference>
<reference key="3">
    <citation type="journal article" date="1997" name="Nature">
        <title>The nucleotide sequence of Saccharomyces cerevisiae chromosome XVI.</title>
        <authorList>
            <person name="Bussey H."/>
            <person name="Storms R.K."/>
            <person name="Ahmed A."/>
            <person name="Albermann K."/>
            <person name="Allen E."/>
            <person name="Ansorge W."/>
            <person name="Araujo R."/>
            <person name="Aparicio A."/>
            <person name="Barrell B.G."/>
            <person name="Badcock K."/>
            <person name="Benes V."/>
            <person name="Botstein D."/>
            <person name="Bowman S."/>
            <person name="Brueckner M."/>
            <person name="Carpenter J."/>
            <person name="Cherry J.M."/>
            <person name="Chung E."/>
            <person name="Churcher C.M."/>
            <person name="Coster F."/>
            <person name="Davis K."/>
            <person name="Davis R.W."/>
            <person name="Dietrich F.S."/>
            <person name="Delius H."/>
            <person name="DiPaolo T."/>
            <person name="Dubois E."/>
            <person name="Duesterhoeft A."/>
            <person name="Duncan M."/>
            <person name="Floeth M."/>
            <person name="Fortin N."/>
            <person name="Friesen J.D."/>
            <person name="Fritz C."/>
            <person name="Goffeau A."/>
            <person name="Hall J."/>
            <person name="Hebling U."/>
            <person name="Heumann K."/>
            <person name="Hilbert H."/>
            <person name="Hillier L.W."/>
            <person name="Hunicke-Smith S."/>
            <person name="Hyman R.W."/>
            <person name="Johnston M."/>
            <person name="Kalman S."/>
            <person name="Kleine K."/>
            <person name="Komp C."/>
            <person name="Kurdi O."/>
            <person name="Lashkari D."/>
            <person name="Lew H."/>
            <person name="Lin A."/>
            <person name="Lin D."/>
            <person name="Louis E.J."/>
            <person name="Marathe R."/>
            <person name="Messenguy F."/>
            <person name="Mewes H.-W."/>
            <person name="Mirtipati S."/>
            <person name="Moestl D."/>
            <person name="Mueller-Auer S."/>
            <person name="Namath A."/>
            <person name="Nentwich U."/>
            <person name="Oefner P."/>
            <person name="Pearson D."/>
            <person name="Petel F.X."/>
            <person name="Pohl T.M."/>
            <person name="Purnelle B."/>
            <person name="Rajandream M.A."/>
            <person name="Rechmann S."/>
            <person name="Rieger M."/>
            <person name="Riles L."/>
            <person name="Roberts D."/>
            <person name="Schaefer M."/>
            <person name="Scharfe M."/>
            <person name="Scherens B."/>
            <person name="Schramm S."/>
            <person name="Schroeder M."/>
            <person name="Sdicu A.-M."/>
            <person name="Tettelin H."/>
            <person name="Urrestarazu L.A."/>
            <person name="Ushinsky S."/>
            <person name="Vierendeels F."/>
            <person name="Vissers S."/>
            <person name="Voss H."/>
            <person name="Walsh S.V."/>
            <person name="Wambutt R."/>
            <person name="Wang Y."/>
            <person name="Wedler E."/>
            <person name="Wedler H."/>
            <person name="Winnett E."/>
            <person name="Zhong W.-W."/>
            <person name="Zollner A."/>
            <person name="Vo D.H."/>
            <person name="Hani J."/>
        </authorList>
    </citation>
    <scope>NUCLEOTIDE SEQUENCE [LARGE SCALE GENOMIC DNA]</scope>
    <source>
        <strain>ATCC 204508 / S288c</strain>
    </source>
</reference>
<reference key="4">
    <citation type="journal article" date="2014" name="G3 (Bethesda)">
        <title>The reference genome sequence of Saccharomyces cerevisiae: Then and now.</title>
        <authorList>
            <person name="Engel S.R."/>
            <person name="Dietrich F.S."/>
            <person name="Fisk D.G."/>
            <person name="Binkley G."/>
            <person name="Balakrishnan R."/>
            <person name="Costanzo M.C."/>
            <person name="Dwight S.S."/>
            <person name="Hitz B.C."/>
            <person name="Karra K."/>
            <person name="Nash R.S."/>
            <person name="Weng S."/>
            <person name="Wong E.D."/>
            <person name="Lloyd P."/>
            <person name="Skrzypek M.S."/>
            <person name="Miyasato S.R."/>
            <person name="Simison M."/>
            <person name="Cherry J.M."/>
        </authorList>
    </citation>
    <scope>GENOME REANNOTATION</scope>
    <source>
        <strain>ATCC 204508 / S288c</strain>
    </source>
</reference>
<reference key="5">
    <citation type="journal article" date="2007" name="Genome Res.">
        <title>Approaching a complete repository of sequence-verified protein-encoding clones for Saccharomyces cerevisiae.</title>
        <authorList>
            <person name="Hu Y."/>
            <person name="Rolfs A."/>
            <person name="Bhullar B."/>
            <person name="Murthy T.V.S."/>
            <person name="Zhu C."/>
            <person name="Berger M.F."/>
            <person name="Camargo A.A."/>
            <person name="Kelley F."/>
            <person name="McCarron S."/>
            <person name="Jepson D."/>
            <person name="Richardson A."/>
            <person name="Raphael J."/>
            <person name="Moreira D."/>
            <person name="Taycher E."/>
            <person name="Zuo D."/>
            <person name="Mohr S."/>
            <person name="Kane M.F."/>
            <person name="Williamson J."/>
            <person name="Simpson A.J.G."/>
            <person name="Bulyk M.L."/>
            <person name="Harlow E."/>
            <person name="Marsischky G."/>
            <person name="Kolodner R.D."/>
            <person name="LaBaer J."/>
        </authorList>
    </citation>
    <scope>NUCLEOTIDE SEQUENCE [GENOMIC DNA]</scope>
    <source>
        <strain>ATCC 204508 / S288c</strain>
    </source>
</reference>
<reference key="6">
    <citation type="journal article" date="1997" name="J. Biol. Chem.">
        <title>VMA11 and VMA16 encode second and third proteolipid subunits of the Saccharomyces cerevisiae vacuolar membrane H+-ATPase.</title>
        <authorList>
            <person name="Hirata R."/>
            <person name="Graham L.A."/>
            <person name="Takatsuki A."/>
            <person name="Stevens T.H."/>
            <person name="Anraku Y."/>
        </authorList>
    </citation>
    <scope>FUNCTION</scope>
    <scope>SUBCELLULAR LOCATION</scope>
    <scope>MUTAGENESIS OF GLU-145</scope>
</reference>
<reference key="7">
    <citation type="journal article" date="2003" name="Nature">
        <title>Global analysis of protein expression in yeast.</title>
        <authorList>
            <person name="Ghaemmaghami S."/>
            <person name="Huh W.-K."/>
            <person name="Bower K."/>
            <person name="Howson R.W."/>
            <person name="Belle A."/>
            <person name="Dephoure N."/>
            <person name="O'Shea E.K."/>
            <person name="Weissman J.S."/>
        </authorList>
    </citation>
    <scope>LEVEL OF PROTEIN EXPRESSION [LARGE SCALE ANALYSIS]</scope>
</reference>
<reference key="8">
    <citation type="journal article" date="2006" name="Proc. Natl. Acad. Sci. U.S.A.">
        <title>A global topology map of the Saccharomyces cerevisiae membrane proteome.</title>
        <authorList>
            <person name="Kim H."/>
            <person name="Melen K."/>
            <person name="Oesterberg M."/>
            <person name="von Heijne G."/>
        </authorList>
    </citation>
    <scope>TOPOLOGY [LARGE SCALE ANALYSIS]</scope>
    <source>
        <strain>ATCC 208353 / W303-1A</strain>
    </source>
</reference>
<reference evidence="8" key="9">
    <citation type="journal article" date="2016" name="Nature">
        <title>Atomic model for the membrane-embedded VO motor of a eukaryotic V-ATPase.</title>
        <authorList>
            <person name="Mazhab-Jafari M.T."/>
            <person name="Rohou A."/>
            <person name="Schmidt C."/>
            <person name="Bueler S.A."/>
            <person name="Benlekbir S."/>
            <person name="Robinson C.V."/>
            <person name="Rubinstein J.L."/>
        </authorList>
    </citation>
    <scope>STRUCTURE BY ELECTRON MICROSCOPY (3.90 ANGSTROMS) OF 17-163</scope>
    <scope>IDENTIFICATION IN THE V-ATPASE COMPLEX</scope>
</reference>
<reference evidence="9" key="10">
    <citation type="journal article" date="2018" name="Mol. Cell">
        <title>The 3.5-A cryoEM structure of nanodisc-reconstituted yeast vacuolar ATPase V0 proton channel.</title>
        <authorList>
            <person name="Roh S.H."/>
            <person name="Stam N.J."/>
            <person name="Hryc C.F."/>
            <person name="Couoh-Cardel S."/>
            <person name="Pintilie G."/>
            <person name="Chiu W."/>
            <person name="Wilkens S."/>
        </authorList>
    </citation>
    <scope>STRUCTURE BY ELECTRON MICROSCOPY (3.50 ANGSTROMS)</scope>
    <scope>IDENTIFICATION IN THE V-ATPASE COMPLEX</scope>
</reference>
<dbReference type="EMBL" id="D10486">
    <property type="protein sequence ID" value="BAA01367.1"/>
    <property type="molecule type" value="Genomic_DNA"/>
</dbReference>
<dbReference type="EMBL" id="M32736">
    <property type="protein sequence ID" value="AAA35149.1"/>
    <property type="status" value="ALT_FRAME"/>
    <property type="molecule type" value="Genomic_DNA"/>
</dbReference>
<dbReference type="EMBL" id="Z67751">
    <property type="protein sequence ID" value="CAA91610.1"/>
    <property type="molecule type" value="Genomic_DNA"/>
</dbReference>
<dbReference type="EMBL" id="X94561">
    <property type="protein sequence ID" value="CAA64253.1"/>
    <property type="molecule type" value="Genomic_DNA"/>
</dbReference>
<dbReference type="EMBL" id="Z73590">
    <property type="protein sequence ID" value="CAA97951.1"/>
    <property type="molecule type" value="Genomic_DNA"/>
</dbReference>
<dbReference type="EMBL" id="AY558058">
    <property type="protein sequence ID" value="AAS56384.1"/>
    <property type="molecule type" value="Genomic_DNA"/>
</dbReference>
<dbReference type="EMBL" id="BK006949">
    <property type="protein sequence ID" value="DAA11202.1"/>
    <property type="molecule type" value="Genomic_DNA"/>
</dbReference>
<dbReference type="PIR" id="A41712">
    <property type="entry name" value="A41712"/>
</dbReference>
<dbReference type="RefSeq" id="NP_015090.1">
    <property type="nucleotide sequence ID" value="NM_001184048.1"/>
</dbReference>
<dbReference type="PDB" id="5TJ5">
    <property type="method" value="EM"/>
    <property type="resolution" value="3.90 A"/>
    <property type="chains" value="D=17-163"/>
</dbReference>
<dbReference type="PDB" id="5VOX">
    <property type="method" value="EM"/>
    <property type="resolution" value="6.80 A"/>
    <property type="chains" value="S=1-164"/>
</dbReference>
<dbReference type="PDB" id="5VOY">
    <property type="method" value="EM"/>
    <property type="resolution" value="7.90 A"/>
    <property type="chains" value="S=1-164"/>
</dbReference>
<dbReference type="PDB" id="5VOZ">
    <property type="method" value="EM"/>
    <property type="resolution" value="7.60 A"/>
    <property type="chains" value="S=1-164"/>
</dbReference>
<dbReference type="PDB" id="6C6L">
    <property type="method" value="EM"/>
    <property type="resolution" value="3.50 A"/>
    <property type="chains" value="D=1-164"/>
</dbReference>
<dbReference type="PDB" id="6M0R">
    <property type="method" value="EM"/>
    <property type="resolution" value="2.70 A"/>
    <property type="chains" value="D=7-164"/>
</dbReference>
<dbReference type="PDB" id="6M0S">
    <property type="method" value="EM"/>
    <property type="resolution" value="3.60 A"/>
    <property type="chains" value="D=7-164"/>
</dbReference>
<dbReference type="PDB" id="6O7T">
    <property type="method" value="EM"/>
    <property type="resolution" value="3.20 A"/>
    <property type="chains" value="o=1-164"/>
</dbReference>
<dbReference type="PDB" id="6O7U">
    <property type="method" value="EM"/>
    <property type="resolution" value="3.10 A"/>
    <property type="chains" value="o=1-164"/>
</dbReference>
<dbReference type="PDB" id="6O7V">
    <property type="method" value="EM"/>
    <property type="resolution" value="6.60 A"/>
    <property type="chains" value="o=1-164"/>
</dbReference>
<dbReference type="PDB" id="6O7W">
    <property type="method" value="EM"/>
    <property type="resolution" value="7.00 A"/>
    <property type="chains" value="o=1-164"/>
</dbReference>
<dbReference type="PDB" id="6O7X">
    <property type="method" value="EM"/>
    <property type="resolution" value="8.70 A"/>
    <property type="chains" value="o=1-164"/>
</dbReference>
<dbReference type="PDB" id="6PE4">
    <property type="method" value="EM"/>
    <property type="resolution" value="3.10 A"/>
    <property type="chains" value="H=1-164"/>
</dbReference>
<dbReference type="PDB" id="6PE5">
    <property type="method" value="EM"/>
    <property type="resolution" value="3.20 A"/>
    <property type="chains" value="H=1-164"/>
</dbReference>
<dbReference type="PDB" id="7FDA">
    <property type="method" value="EM"/>
    <property type="resolution" value="4.20 A"/>
    <property type="chains" value="U=1-164"/>
</dbReference>
<dbReference type="PDB" id="7FDB">
    <property type="method" value="EM"/>
    <property type="resolution" value="4.80 A"/>
    <property type="chains" value="U=1-164"/>
</dbReference>
<dbReference type="PDB" id="7FDC">
    <property type="method" value="EM"/>
    <property type="resolution" value="6.60 A"/>
    <property type="chains" value="U=1-164"/>
</dbReference>
<dbReference type="PDB" id="7TAO">
    <property type="method" value="EM"/>
    <property type="resolution" value="3.20 A"/>
    <property type="chains" value="D=1-164"/>
</dbReference>
<dbReference type="PDB" id="7TAP">
    <property type="method" value="EM"/>
    <property type="resolution" value="2.80 A"/>
    <property type="chains" value="D=1-164"/>
</dbReference>
<dbReference type="PDB" id="7TMR">
    <property type="method" value="EM"/>
    <property type="resolution" value="3.50 A"/>
    <property type="chains" value="o=1-164"/>
</dbReference>
<dbReference type="PDB" id="7TMS">
    <property type="method" value="EM"/>
    <property type="resolution" value="3.80 A"/>
    <property type="chains" value="o=1-164"/>
</dbReference>
<dbReference type="PDB" id="7TMT">
    <property type="method" value="EM"/>
    <property type="resolution" value="3.80 A"/>
    <property type="chains" value="o=1-164"/>
</dbReference>
<dbReference type="PDB" id="8EAS">
    <property type="method" value="EM"/>
    <property type="resolution" value="2.60 A"/>
    <property type="chains" value="o=1-164"/>
</dbReference>
<dbReference type="PDB" id="8EAT">
    <property type="method" value="EM"/>
    <property type="resolution" value="3.10 A"/>
    <property type="chains" value="o=1-164"/>
</dbReference>
<dbReference type="PDB" id="8EAU">
    <property type="method" value="EM"/>
    <property type="resolution" value="3.10 A"/>
    <property type="chains" value="o=1-164"/>
</dbReference>
<dbReference type="PDB" id="9E76">
    <property type="method" value="EM"/>
    <property type="resolution" value="3.40 A"/>
    <property type="chains" value="D=1-164"/>
</dbReference>
<dbReference type="PDB" id="9E7L">
    <property type="method" value="EM"/>
    <property type="resolution" value="3.33 A"/>
    <property type="chains" value="D=1-164"/>
</dbReference>
<dbReference type="PDB" id="9MJ4">
    <property type="method" value="EM"/>
    <property type="resolution" value="3.70 A"/>
    <property type="chains" value="D=1-164"/>
</dbReference>
<dbReference type="PDBsum" id="5TJ5"/>
<dbReference type="PDBsum" id="5VOX"/>
<dbReference type="PDBsum" id="5VOY"/>
<dbReference type="PDBsum" id="5VOZ"/>
<dbReference type="PDBsum" id="6C6L"/>
<dbReference type="PDBsum" id="6M0R"/>
<dbReference type="PDBsum" id="6M0S"/>
<dbReference type="PDBsum" id="6O7T"/>
<dbReference type="PDBsum" id="6O7U"/>
<dbReference type="PDBsum" id="6O7V"/>
<dbReference type="PDBsum" id="6O7W"/>
<dbReference type="PDBsum" id="6O7X"/>
<dbReference type="PDBsum" id="6PE4"/>
<dbReference type="PDBsum" id="6PE5"/>
<dbReference type="PDBsum" id="7FDA"/>
<dbReference type="PDBsum" id="7FDB"/>
<dbReference type="PDBsum" id="7FDC"/>
<dbReference type="PDBsum" id="7TAO"/>
<dbReference type="PDBsum" id="7TAP"/>
<dbReference type="PDBsum" id="7TMR"/>
<dbReference type="PDBsum" id="7TMS"/>
<dbReference type="PDBsum" id="7TMT"/>
<dbReference type="PDBsum" id="8EAS"/>
<dbReference type="PDBsum" id="8EAT"/>
<dbReference type="PDBsum" id="8EAU"/>
<dbReference type="PDBsum" id="9E76"/>
<dbReference type="PDBsum" id="9E7L"/>
<dbReference type="PDBsum" id="9MJ4"/>
<dbReference type="EMDB" id="EMD-0644"/>
<dbReference type="EMDB" id="EMD-0645"/>
<dbReference type="EMDB" id="EMD-0646"/>
<dbReference type="EMDB" id="EMD-0647"/>
<dbReference type="EMDB" id="EMD-0648"/>
<dbReference type="EMDB" id="EMD-20322"/>
<dbReference type="EMDB" id="EMD-20323"/>
<dbReference type="EMDB" id="EMD-25779"/>
<dbReference type="EMDB" id="EMD-25780"/>
<dbReference type="EMDB" id="EMD-26000"/>
<dbReference type="EMDB" id="EMD-26001"/>
<dbReference type="EMDB" id="EMD-26002"/>
<dbReference type="EMDB" id="EMD-27984"/>
<dbReference type="EMDB" id="EMD-27985"/>
<dbReference type="EMDB" id="EMD-27986"/>
<dbReference type="EMDB" id="EMD-30034"/>
<dbReference type="EMDB" id="EMD-30035"/>
<dbReference type="EMDB" id="EMD-31538"/>
<dbReference type="EMDB" id="EMD-31539"/>
<dbReference type="EMDB" id="EMD-31540"/>
<dbReference type="EMDB" id="EMD-47659"/>
<dbReference type="EMDB" id="EMD-47679"/>
<dbReference type="EMDB" id="EMD-48311"/>
<dbReference type="EMDB" id="EMD-7348"/>
<dbReference type="EMDB" id="EMD-8409"/>
<dbReference type="EMDB" id="EMD-8724"/>
<dbReference type="EMDB" id="EMD-8725"/>
<dbReference type="EMDB" id="EMD-8726"/>
<dbReference type="SMR" id="P32842"/>
<dbReference type="BioGRID" id="35928">
    <property type="interactions" value="252"/>
</dbReference>
<dbReference type="ComplexPortal" id="CPX-1192">
    <property type="entry name" value="Vacuolar proton translocating ATPase complex, Golgi variant"/>
</dbReference>
<dbReference type="ComplexPortal" id="CPX-1193">
    <property type="entry name" value="Vacuolar proton translocating ATPase complex, vacuole variant"/>
</dbReference>
<dbReference type="DIP" id="DIP-5394N"/>
<dbReference type="FunCoup" id="P32842">
    <property type="interactions" value="223"/>
</dbReference>
<dbReference type="IntAct" id="P32842">
    <property type="interactions" value="23"/>
</dbReference>
<dbReference type="MINT" id="P32842"/>
<dbReference type="STRING" id="4932.YPL234C"/>
<dbReference type="BindingDB" id="P32842"/>
<dbReference type="ChEMBL" id="CHEMBL1795084"/>
<dbReference type="TCDB" id="3.A.2.2.3">
    <property type="family name" value="the h+- or na+-translocating f-type, v-type and a-type atpase (f-atpase) superfamily"/>
</dbReference>
<dbReference type="PaxDb" id="4932-YPL234C"/>
<dbReference type="PeptideAtlas" id="P32842"/>
<dbReference type="EnsemblFungi" id="YPL234C_mRNA">
    <property type="protein sequence ID" value="YPL234C"/>
    <property type="gene ID" value="YPL234C"/>
</dbReference>
<dbReference type="GeneID" id="855842"/>
<dbReference type="KEGG" id="sce:YPL234C"/>
<dbReference type="AGR" id="SGD:S000006155"/>
<dbReference type="SGD" id="S000006155">
    <property type="gene designation" value="VMA11"/>
</dbReference>
<dbReference type="VEuPathDB" id="FungiDB:YPL234C"/>
<dbReference type="eggNOG" id="KOG0232">
    <property type="taxonomic scope" value="Eukaryota"/>
</dbReference>
<dbReference type="GeneTree" id="ENSGT00960000189220"/>
<dbReference type="HOGENOM" id="CLU_085752_1_1_1"/>
<dbReference type="InParanoid" id="P32842"/>
<dbReference type="OMA" id="MSVCPPY"/>
<dbReference type="OrthoDB" id="1744869at2759"/>
<dbReference type="BioCyc" id="YEAST:G3O-34121-MONOMER"/>
<dbReference type="BioGRID-ORCS" id="855842">
    <property type="hits" value="10 hits in 10 CRISPR screens"/>
</dbReference>
<dbReference type="PRO" id="PR:P32842"/>
<dbReference type="Proteomes" id="UP000002311">
    <property type="component" value="Chromosome XVI"/>
</dbReference>
<dbReference type="RNAct" id="P32842">
    <property type="molecule type" value="protein"/>
</dbReference>
<dbReference type="GO" id="GO:0071944">
    <property type="term" value="C:cell periphery"/>
    <property type="evidence" value="ECO:0007005"/>
    <property type="project" value="SGD"/>
</dbReference>
<dbReference type="GO" id="GO:0000324">
    <property type="term" value="C:fungal-type vacuole"/>
    <property type="evidence" value="ECO:0000314"/>
    <property type="project" value="SGD"/>
</dbReference>
<dbReference type="GO" id="GO:0000329">
    <property type="term" value="C:fungal-type vacuole membrane"/>
    <property type="evidence" value="ECO:0007005"/>
    <property type="project" value="SGD"/>
</dbReference>
<dbReference type="GO" id="GO:0000139">
    <property type="term" value="C:Golgi membrane"/>
    <property type="evidence" value="ECO:0000303"/>
    <property type="project" value="ComplexPortal"/>
</dbReference>
<dbReference type="GO" id="GO:0016020">
    <property type="term" value="C:membrane"/>
    <property type="evidence" value="ECO:0000314"/>
    <property type="project" value="SGD"/>
</dbReference>
<dbReference type="GO" id="GO:0033176">
    <property type="term" value="C:proton-transporting V-type ATPase complex"/>
    <property type="evidence" value="ECO:0000353"/>
    <property type="project" value="ComplexPortal"/>
</dbReference>
<dbReference type="GO" id="GO:0016471">
    <property type="term" value="C:vacuolar proton-transporting V-type ATPase complex"/>
    <property type="evidence" value="ECO:0000353"/>
    <property type="project" value="ComplexPortal"/>
</dbReference>
<dbReference type="GO" id="GO:0000220">
    <property type="term" value="C:vacuolar proton-transporting V-type ATPase, V0 domain"/>
    <property type="evidence" value="ECO:0000314"/>
    <property type="project" value="UniProtKB"/>
</dbReference>
<dbReference type="GO" id="GO:0046961">
    <property type="term" value="F:proton-transporting ATPase activity, rotational mechanism"/>
    <property type="evidence" value="ECO:0000304"/>
    <property type="project" value="SGD"/>
</dbReference>
<dbReference type="GO" id="GO:0048388">
    <property type="term" value="P:endosomal lumen acidification"/>
    <property type="evidence" value="ECO:0000303"/>
    <property type="project" value="ComplexPortal"/>
</dbReference>
<dbReference type="GO" id="GO:0061795">
    <property type="term" value="P:Golgi lumen acidification"/>
    <property type="evidence" value="ECO:0000303"/>
    <property type="project" value="ComplexPortal"/>
</dbReference>
<dbReference type="GO" id="GO:1902600">
    <property type="term" value="P:proton transmembrane transport"/>
    <property type="evidence" value="ECO:0000314"/>
    <property type="project" value="ComplexPortal"/>
</dbReference>
<dbReference type="GO" id="GO:0007035">
    <property type="term" value="P:vacuolar acidification"/>
    <property type="evidence" value="ECO:0000304"/>
    <property type="project" value="SGD"/>
</dbReference>
<dbReference type="CDD" id="cd18175">
    <property type="entry name" value="ATP-synt_Vo_c_ATP6C_rpt1"/>
    <property type="match status" value="1"/>
</dbReference>
<dbReference type="CDD" id="cd18176">
    <property type="entry name" value="ATP-synt_Vo_c_ATP6C_rpt2"/>
    <property type="match status" value="1"/>
</dbReference>
<dbReference type="FunFam" id="1.20.120.610:FF:000003">
    <property type="entry name" value="V-type proton ATPase proteolipid subunit"/>
    <property type="match status" value="1"/>
</dbReference>
<dbReference type="Gene3D" id="1.20.120.610">
    <property type="entry name" value="lithium bound rotor ring of v- atpase"/>
    <property type="match status" value="1"/>
</dbReference>
<dbReference type="InterPro" id="IPR002379">
    <property type="entry name" value="ATPase_proteolipid_c-like_dom"/>
</dbReference>
<dbReference type="InterPro" id="IPR000245">
    <property type="entry name" value="ATPase_proteolipid_csu"/>
</dbReference>
<dbReference type="InterPro" id="IPR011555">
    <property type="entry name" value="ATPase_proteolipid_su_C_euk"/>
</dbReference>
<dbReference type="InterPro" id="IPR035921">
    <property type="entry name" value="F/V-ATP_Csub_sf"/>
</dbReference>
<dbReference type="NCBIfam" id="TIGR01100">
    <property type="entry name" value="V_ATP_synt_C"/>
    <property type="match status" value="1"/>
</dbReference>
<dbReference type="PANTHER" id="PTHR10263">
    <property type="entry name" value="V-TYPE PROTON ATPASE PROTEOLIPID SUBUNIT"/>
    <property type="match status" value="1"/>
</dbReference>
<dbReference type="Pfam" id="PF00137">
    <property type="entry name" value="ATP-synt_C"/>
    <property type="match status" value="2"/>
</dbReference>
<dbReference type="PRINTS" id="PR00122">
    <property type="entry name" value="VACATPASE"/>
</dbReference>
<dbReference type="SUPFAM" id="SSF81333">
    <property type="entry name" value="F1F0 ATP synthase subunit C"/>
    <property type="match status" value="1"/>
</dbReference>
<feature type="chain" id="PRO_0000071788" description="V-type proton ATPase subunit c'">
    <location>
        <begin position="1"/>
        <end position="164"/>
    </location>
</feature>
<feature type="topological domain" description="Vacuolar" evidence="1">
    <location>
        <begin position="1"/>
        <end position="14"/>
    </location>
</feature>
<feature type="transmembrane region" description="Helical" evidence="1">
    <location>
        <begin position="15"/>
        <end position="37"/>
    </location>
</feature>
<feature type="topological domain" description="Cytoplasmic" evidence="1">
    <location>
        <begin position="38"/>
        <end position="59"/>
    </location>
</feature>
<feature type="transmembrane region" description="Helical" evidence="1">
    <location>
        <begin position="60"/>
        <end position="80"/>
    </location>
</feature>
<feature type="topological domain" description="Vacuolar" evidence="1">
    <location>
        <begin position="81"/>
        <end position="98"/>
    </location>
</feature>
<feature type="transmembrane region" description="Helical" evidence="1">
    <location>
        <begin position="99"/>
        <end position="120"/>
    </location>
</feature>
<feature type="topological domain" description="Cytoplasmic" evidence="1">
    <location>
        <begin position="121"/>
        <end position="132"/>
    </location>
</feature>
<feature type="transmembrane region" description="Helical" evidence="1">
    <location>
        <begin position="133"/>
        <end position="158"/>
    </location>
</feature>
<feature type="topological domain" description="Vacuolar" evidence="1">
    <location>
        <begin position="159"/>
        <end position="164"/>
    </location>
</feature>
<feature type="site" description="Essential for proton translocation" evidence="6">
    <location>
        <position position="145"/>
    </location>
</feature>
<feature type="mutagenesis site" description="Partial inactivation." evidence="6">
    <original>E</original>
    <variation>D</variation>
    <location>
        <position position="145"/>
    </location>
</feature>
<feature type="mutagenesis site" description="Inactivation." evidence="6">
    <original>E</original>
    <variation>L</variation>
    <variation>Q</variation>
    <location>
        <position position="145"/>
    </location>
</feature>
<feature type="sequence conflict" description="In Ref. 2; AAA35149." evidence="7" ref="2">
    <location>
        <begin position="27"/>
        <end position="35"/>
    </location>
</feature>
<feature type="strand" evidence="10">
    <location>
        <begin position="9"/>
        <end position="11"/>
    </location>
</feature>
<feature type="helix" evidence="11">
    <location>
        <begin position="15"/>
        <end position="48"/>
    </location>
</feature>
<feature type="turn" evidence="11">
    <location>
        <begin position="49"/>
        <end position="51"/>
    </location>
</feature>
<feature type="helix" evidence="10">
    <location>
        <begin position="53"/>
        <end position="55"/>
    </location>
</feature>
<feature type="turn" evidence="10">
    <location>
        <begin position="57"/>
        <end position="60"/>
    </location>
</feature>
<feature type="helix" evidence="11">
    <location>
        <begin position="61"/>
        <end position="83"/>
    </location>
</feature>
<feature type="strand" evidence="11">
    <location>
        <begin position="86"/>
        <end position="88"/>
    </location>
</feature>
<feature type="helix" evidence="11">
    <location>
        <begin position="92"/>
        <end position="129"/>
    </location>
</feature>
<feature type="helix" evidence="11">
    <location>
        <begin position="131"/>
        <end position="133"/>
    </location>
</feature>
<feature type="helix" evidence="11">
    <location>
        <begin position="134"/>
        <end position="163"/>
    </location>
</feature>